<feature type="chain" id="PRO_0000150143" description="Phosphoserine aminotransferase">
    <location>
        <begin position="1"/>
        <end position="366"/>
    </location>
</feature>
<feature type="binding site" evidence="1">
    <location>
        <position position="42"/>
    </location>
    <ligand>
        <name>L-glutamate</name>
        <dbReference type="ChEBI" id="CHEBI:29985"/>
    </ligand>
</feature>
<feature type="binding site" evidence="1">
    <location>
        <begin position="76"/>
        <end position="77"/>
    </location>
    <ligand>
        <name>pyridoxal 5'-phosphate</name>
        <dbReference type="ChEBI" id="CHEBI:597326"/>
    </ligand>
</feature>
<feature type="binding site" evidence="1">
    <location>
        <position position="101"/>
    </location>
    <ligand>
        <name>pyridoxal 5'-phosphate</name>
        <dbReference type="ChEBI" id="CHEBI:597326"/>
    </ligand>
</feature>
<feature type="binding site" evidence="1">
    <location>
        <position position="156"/>
    </location>
    <ligand>
        <name>pyridoxal 5'-phosphate</name>
        <dbReference type="ChEBI" id="CHEBI:597326"/>
    </ligand>
</feature>
<feature type="binding site" evidence="1">
    <location>
        <position position="178"/>
    </location>
    <ligand>
        <name>pyridoxal 5'-phosphate</name>
        <dbReference type="ChEBI" id="CHEBI:597326"/>
    </ligand>
</feature>
<feature type="binding site" evidence="1">
    <location>
        <position position="201"/>
    </location>
    <ligand>
        <name>pyridoxal 5'-phosphate</name>
        <dbReference type="ChEBI" id="CHEBI:597326"/>
    </ligand>
</feature>
<feature type="binding site" evidence="1">
    <location>
        <begin position="243"/>
        <end position="244"/>
    </location>
    <ligand>
        <name>pyridoxal 5'-phosphate</name>
        <dbReference type="ChEBI" id="CHEBI:597326"/>
    </ligand>
</feature>
<feature type="modified residue" description="N6-(pyridoxal phosphate)lysine" evidence="1">
    <location>
        <position position="202"/>
    </location>
</feature>
<gene>
    <name evidence="1" type="primary">serC</name>
    <name type="ordered locus">AZOSEA04920</name>
    <name type="ORF">ebA907</name>
</gene>
<comment type="function">
    <text evidence="1">Catalyzes the reversible conversion of 3-phosphohydroxypyruvate to phosphoserine and of 3-hydroxy-2-oxo-4-phosphonooxybutanoate to phosphohydroxythreonine.</text>
</comment>
<comment type="catalytic activity">
    <reaction evidence="1">
        <text>O-phospho-L-serine + 2-oxoglutarate = 3-phosphooxypyruvate + L-glutamate</text>
        <dbReference type="Rhea" id="RHEA:14329"/>
        <dbReference type="ChEBI" id="CHEBI:16810"/>
        <dbReference type="ChEBI" id="CHEBI:18110"/>
        <dbReference type="ChEBI" id="CHEBI:29985"/>
        <dbReference type="ChEBI" id="CHEBI:57524"/>
        <dbReference type="EC" id="2.6.1.52"/>
    </reaction>
</comment>
<comment type="catalytic activity">
    <reaction evidence="1">
        <text>4-(phosphooxy)-L-threonine + 2-oxoglutarate = (R)-3-hydroxy-2-oxo-4-phosphooxybutanoate + L-glutamate</text>
        <dbReference type="Rhea" id="RHEA:16573"/>
        <dbReference type="ChEBI" id="CHEBI:16810"/>
        <dbReference type="ChEBI" id="CHEBI:29985"/>
        <dbReference type="ChEBI" id="CHEBI:58452"/>
        <dbReference type="ChEBI" id="CHEBI:58538"/>
        <dbReference type="EC" id="2.6.1.52"/>
    </reaction>
</comment>
<comment type="cofactor">
    <cofactor evidence="1">
        <name>pyridoxal 5'-phosphate</name>
        <dbReference type="ChEBI" id="CHEBI:597326"/>
    </cofactor>
    <text evidence="1">Binds 1 pyridoxal phosphate per subunit.</text>
</comment>
<comment type="pathway">
    <text evidence="1">Amino-acid biosynthesis; L-serine biosynthesis; L-serine from 3-phospho-D-glycerate: step 2/3.</text>
</comment>
<comment type="pathway">
    <text evidence="1">Cofactor biosynthesis; pyridoxine 5'-phosphate biosynthesis; pyridoxine 5'-phosphate from D-erythrose 4-phosphate: step 3/5.</text>
</comment>
<comment type="subunit">
    <text evidence="1">Homodimer.</text>
</comment>
<comment type="subcellular location">
    <subcellularLocation>
        <location evidence="1">Cytoplasm</location>
    </subcellularLocation>
</comment>
<comment type="similarity">
    <text evidence="1">Belongs to the class-V pyridoxal-phosphate-dependent aminotransferase family. SerC subfamily.</text>
</comment>
<accession>Q5P7U7</accession>
<proteinExistence type="inferred from homology"/>
<name>SERC_AROAE</name>
<evidence type="ECO:0000255" key="1">
    <source>
        <dbReference type="HAMAP-Rule" id="MF_00160"/>
    </source>
</evidence>
<keyword id="KW-0028">Amino-acid biosynthesis</keyword>
<keyword id="KW-0032">Aminotransferase</keyword>
<keyword id="KW-0963">Cytoplasm</keyword>
<keyword id="KW-0663">Pyridoxal phosphate</keyword>
<keyword id="KW-0664">Pyridoxine biosynthesis</keyword>
<keyword id="KW-1185">Reference proteome</keyword>
<keyword id="KW-0718">Serine biosynthesis</keyword>
<keyword id="KW-0808">Transferase</keyword>
<organism>
    <name type="scientific">Aromatoleum aromaticum (strain DSM 19018 / LMG 30748 / EbN1)</name>
    <name type="common">Azoarcus sp. (strain EbN1)</name>
    <dbReference type="NCBI Taxonomy" id="76114"/>
    <lineage>
        <taxon>Bacteria</taxon>
        <taxon>Pseudomonadati</taxon>
        <taxon>Pseudomonadota</taxon>
        <taxon>Betaproteobacteria</taxon>
        <taxon>Rhodocyclales</taxon>
        <taxon>Rhodocyclaceae</taxon>
        <taxon>Aromatoleum</taxon>
    </lineage>
</organism>
<dbReference type="EC" id="2.6.1.52" evidence="1"/>
<dbReference type="EMBL" id="CR555306">
    <property type="protein sequence ID" value="CAI06614.1"/>
    <property type="molecule type" value="Genomic_DNA"/>
</dbReference>
<dbReference type="RefSeq" id="WP_011236344.1">
    <property type="nucleotide sequence ID" value="NC_006513.1"/>
</dbReference>
<dbReference type="SMR" id="Q5P7U7"/>
<dbReference type="STRING" id="76114.ebA907"/>
<dbReference type="KEGG" id="eba:ebA907"/>
<dbReference type="eggNOG" id="COG1932">
    <property type="taxonomic scope" value="Bacteria"/>
</dbReference>
<dbReference type="HOGENOM" id="CLU_034866_0_2_4"/>
<dbReference type="OrthoDB" id="9809412at2"/>
<dbReference type="UniPathway" id="UPA00135">
    <property type="reaction ID" value="UER00197"/>
</dbReference>
<dbReference type="UniPathway" id="UPA00244">
    <property type="reaction ID" value="UER00311"/>
</dbReference>
<dbReference type="Proteomes" id="UP000006552">
    <property type="component" value="Chromosome"/>
</dbReference>
<dbReference type="GO" id="GO:0005737">
    <property type="term" value="C:cytoplasm"/>
    <property type="evidence" value="ECO:0007669"/>
    <property type="project" value="UniProtKB-SubCell"/>
</dbReference>
<dbReference type="GO" id="GO:0004648">
    <property type="term" value="F:O-phospho-L-serine:2-oxoglutarate aminotransferase activity"/>
    <property type="evidence" value="ECO:0007669"/>
    <property type="project" value="UniProtKB-UniRule"/>
</dbReference>
<dbReference type="GO" id="GO:0030170">
    <property type="term" value="F:pyridoxal phosphate binding"/>
    <property type="evidence" value="ECO:0007669"/>
    <property type="project" value="UniProtKB-UniRule"/>
</dbReference>
<dbReference type="GO" id="GO:0006564">
    <property type="term" value="P:L-serine biosynthetic process"/>
    <property type="evidence" value="ECO:0007669"/>
    <property type="project" value="UniProtKB-UniRule"/>
</dbReference>
<dbReference type="GO" id="GO:0008615">
    <property type="term" value="P:pyridoxine biosynthetic process"/>
    <property type="evidence" value="ECO:0007669"/>
    <property type="project" value="UniProtKB-UniRule"/>
</dbReference>
<dbReference type="CDD" id="cd00611">
    <property type="entry name" value="PSAT_like"/>
    <property type="match status" value="1"/>
</dbReference>
<dbReference type="FunFam" id="3.40.640.10:FF:000010">
    <property type="entry name" value="Phosphoserine aminotransferase"/>
    <property type="match status" value="1"/>
</dbReference>
<dbReference type="FunFam" id="3.90.1150.10:FF:000006">
    <property type="entry name" value="Phosphoserine aminotransferase"/>
    <property type="match status" value="1"/>
</dbReference>
<dbReference type="Gene3D" id="3.90.1150.10">
    <property type="entry name" value="Aspartate Aminotransferase, domain 1"/>
    <property type="match status" value="1"/>
</dbReference>
<dbReference type="Gene3D" id="3.40.640.10">
    <property type="entry name" value="Type I PLP-dependent aspartate aminotransferase-like (Major domain)"/>
    <property type="match status" value="1"/>
</dbReference>
<dbReference type="HAMAP" id="MF_00160">
    <property type="entry name" value="SerC_aminotrans_5"/>
    <property type="match status" value="1"/>
</dbReference>
<dbReference type="InterPro" id="IPR000192">
    <property type="entry name" value="Aminotrans_V_dom"/>
</dbReference>
<dbReference type="InterPro" id="IPR022278">
    <property type="entry name" value="Pser_aminoTfrase"/>
</dbReference>
<dbReference type="InterPro" id="IPR015424">
    <property type="entry name" value="PyrdxlP-dep_Trfase"/>
</dbReference>
<dbReference type="InterPro" id="IPR015421">
    <property type="entry name" value="PyrdxlP-dep_Trfase_major"/>
</dbReference>
<dbReference type="InterPro" id="IPR015422">
    <property type="entry name" value="PyrdxlP-dep_Trfase_small"/>
</dbReference>
<dbReference type="NCBIfam" id="NF003764">
    <property type="entry name" value="PRK05355.1"/>
    <property type="match status" value="1"/>
</dbReference>
<dbReference type="NCBIfam" id="TIGR01364">
    <property type="entry name" value="serC_1"/>
    <property type="match status" value="1"/>
</dbReference>
<dbReference type="PANTHER" id="PTHR43247">
    <property type="entry name" value="PHOSPHOSERINE AMINOTRANSFERASE"/>
    <property type="match status" value="1"/>
</dbReference>
<dbReference type="PANTHER" id="PTHR43247:SF1">
    <property type="entry name" value="PHOSPHOSERINE AMINOTRANSFERASE"/>
    <property type="match status" value="1"/>
</dbReference>
<dbReference type="Pfam" id="PF00266">
    <property type="entry name" value="Aminotran_5"/>
    <property type="match status" value="1"/>
</dbReference>
<dbReference type="PIRSF" id="PIRSF000525">
    <property type="entry name" value="SerC"/>
    <property type="match status" value="1"/>
</dbReference>
<dbReference type="SUPFAM" id="SSF53383">
    <property type="entry name" value="PLP-dependent transferases"/>
    <property type="match status" value="1"/>
</dbReference>
<protein>
    <recommendedName>
        <fullName evidence="1">Phosphoserine aminotransferase</fullName>
        <ecNumber evidence="1">2.6.1.52</ecNumber>
    </recommendedName>
    <alternativeName>
        <fullName evidence="1">Phosphohydroxythreonine aminotransferase</fullName>
        <shortName evidence="1">PSAT</shortName>
    </alternativeName>
</protein>
<reference key="1">
    <citation type="journal article" date="2005" name="Arch. Microbiol.">
        <title>The genome sequence of an anaerobic aromatic-degrading denitrifying bacterium, strain EbN1.</title>
        <authorList>
            <person name="Rabus R."/>
            <person name="Kube M."/>
            <person name="Heider J."/>
            <person name="Beck A."/>
            <person name="Heitmann K."/>
            <person name="Widdel F."/>
            <person name="Reinhardt R."/>
        </authorList>
    </citation>
    <scope>NUCLEOTIDE SEQUENCE [LARGE SCALE GENOMIC DNA]</scope>
    <source>
        <strain>DSM 19018 / LMG 30748 / EbN1</strain>
    </source>
</reference>
<sequence>MTRVYNFSAGPAALPEAVLQQAAEEMLDWQGAGCGVMEMSHRGKEFTSIVAQAEADLRELLAIPDNYRVLFLQGGATQQFAQIPMNLLAGGSADYLVTGSWSKKAYGEAKHLAGALGGAVRLAGSTETAGFTRLLRTEELDLDPRARYLHLCTNETIHGVELCEVSRLPDTGVPLVADMSSHILSRPLDIGRYGLIYAGAQKNIGPSGLVVVIVREDLLGHASPVTPTIMDYRVMAENGSMLNTPPTYAIYIAGLVFRWLKAQGGLAAVEANNIAKSDLLYDFLDASDFYENRVAQDSRSRMNIPFLLRDDALNDPFLAGAKAAGLTQLKGHKSVGGMRASIYNAMPLAGVQALVDYMRDFSARNG</sequence>